<proteinExistence type="inferred from homology"/>
<comment type="function">
    <text evidence="1">Catalyzes the NADPH-dependent reduction of 7-cyano-7-deazaguanine (preQ0) to 7-aminomethyl-7-deazaguanine (preQ1).</text>
</comment>
<comment type="catalytic activity">
    <reaction evidence="1">
        <text>7-aminomethyl-7-carbaguanine + 2 NADP(+) = 7-cyano-7-deazaguanine + 2 NADPH + 3 H(+)</text>
        <dbReference type="Rhea" id="RHEA:13409"/>
        <dbReference type="ChEBI" id="CHEBI:15378"/>
        <dbReference type="ChEBI" id="CHEBI:45075"/>
        <dbReference type="ChEBI" id="CHEBI:57783"/>
        <dbReference type="ChEBI" id="CHEBI:58349"/>
        <dbReference type="ChEBI" id="CHEBI:58703"/>
        <dbReference type="EC" id="1.7.1.13"/>
    </reaction>
</comment>
<comment type="pathway">
    <text evidence="1">tRNA modification; tRNA-queuosine biosynthesis.</text>
</comment>
<comment type="subunit">
    <text evidence="1">Homodimer.</text>
</comment>
<comment type="subcellular location">
    <subcellularLocation>
        <location evidence="1">Cytoplasm</location>
    </subcellularLocation>
</comment>
<comment type="similarity">
    <text evidence="1">Belongs to the GTP cyclohydrolase I family. QueF type 2 subfamily.</text>
</comment>
<name>QUEF_ALIFM</name>
<gene>
    <name evidence="1" type="primary">queF</name>
    <name type="ordered locus">VFMJ11_0612</name>
</gene>
<accession>B5FAU1</accession>
<organism>
    <name type="scientific">Aliivibrio fischeri (strain MJ11)</name>
    <name type="common">Vibrio fischeri</name>
    <dbReference type="NCBI Taxonomy" id="388396"/>
    <lineage>
        <taxon>Bacteria</taxon>
        <taxon>Pseudomonadati</taxon>
        <taxon>Pseudomonadota</taxon>
        <taxon>Gammaproteobacteria</taxon>
        <taxon>Vibrionales</taxon>
        <taxon>Vibrionaceae</taxon>
        <taxon>Aliivibrio</taxon>
    </lineage>
</organism>
<dbReference type="EC" id="1.7.1.13" evidence="1"/>
<dbReference type="EMBL" id="CP001139">
    <property type="protein sequence ID" value="ACH66369.1"/>
    <property type="molecule type" value="Genomic_DNA"/>
</dbReference>
<dbReference type="RefSeq" id="WP_012533678.1">
    <property type="nucleotide sequence ID" value="NC_011184.1"/>
</dbReference>
<dbReference type="SMR" id="B5FAU1"/>
<dbReference type="KEGG" id="vfm:VFMJ11_0612"/>
<dbReference type="HOGENOM" id="CLU_054738_0_0_6"/>
<dbReference type="UniPathway" id="UPA00392"/>
<dbReference type="Proteomes" id="UP000001857">
    <property type="component" value="Chromosome I"/>
</dbReference>
<dbReference type="GO" id="GO:0005737">
    <property type="term" value="C:cytoplasm"/>
    <property type="evidence" value="ECO:0007669"/>
    <property type="project" value="UniProtKB-SubCell"/>
</dbReference>
<dbReference type="GO" id="GO:0033739">
    <property type="term" value="F:preQ1 synthase activity"/>
    <property type="evidence" value="ECO:0007669"/>
    <property type="project" value="UniProtKB-UniRule"/>
</dbReference>
<dbReference type="GO" id="GO:0008616">
    <property type="term" value="P:queuosine biosynthetic process"/>
    <property type="evidence" value="ECO:0007669"/>
    <property type="project" value="UniProtKB-UniRule"/>
</dbReference>
<dbReference type="GO" id="GO:0006400">
    <property type="term" value="P:tRNA modification"/>
    <property type="evidence" value="ECO:0007669"/>
    <property type="project" value="UniProtKB-UniRule"/>
</dbReference>
<dbReference type="Gene3D" id="3.30.1130.10">
    <property type="match status" value="2"/>
</dbReference>
<dbReference type="HAMAP" id="MF_00817">
    <property type="entry name" value="QueF_type2"/>
    <property type="match status" value="1"/>
</dbReference>
<dbReference type="InterPro" id="IPR043133">
    <property type="entry name" value="GTP-CH-I_C/QueF"/>
</dbReference>
<dbReference type="InterPro" id="IPR050084">
    <property type="entry name" value="NADPH_dep_7-cyano-7-deazaG_red"/>
</dbReference>
<dbReference type="InterPro" id="IPR029500">
    <property type="entry name" value="QueF"/>
</dbReference>
<dbReference type="InterPro" id="IPR029139">
    <property type="entry name" value="QueF_N"/>
</dbReference>
<dbReference type="InterPro" id="IPR016428">
    <property type="entry name" value="QueF_type2"/>
</dbReference>
<dbReference type="NCBIfam" id="TIGR03138">
    <property type="entry name" value="QueF"/>
    <property type="match status" value="1"/>
</dbReference>
<dbReference type="PANTHER" id="PTHR34354">
    <property type="entry name" value="NADPH-DEPENDENT 7-CYANO-7-DEAZAGUANINE REDUCTASE"/>
    <property type="match status" value="1"/>
</dbReference>
<dbReference type="PANTHER" id="PTHR34354:SF1">
    <property type="entry name" value="NADPH-DEPENDENT 7-CYANO-7-DEAZAGUANINE REDUCTASE"/>
    <property type="match status" value="1"/>
</dbReference>
<dbReference type="Pfam" id="PF14489">
    <property type="entry name" value="QueF"/>
    <property type="match status" value="1"/>
</dbReference>
<dbReference type="Pfam" id="PF14819">
    <property type="entry name" value="QueF_N"/>
    <property type="match status" value="1"/>
</dbReference>
<dbReference type="PIRSF" id="PIRSF004750">
    <property type="entry name" value="Nitrile_oxidored_YqcD_prd"/>
    <property type="match status" value="1"/>
</dbReference>
<dbReference type="SUPFAM" id="SSF55620">
    <property type="entry name" value="Tetrahydrobiopterin biosynthesis enzymes-like"/>
    <property type="match status" value="1"/>
</dbReference>
<sequence>MTKYTNADELKSLTLGQKTEYKHTYEPELLQAVPRSLNRDDLALGDELPFVGCDVWTLYELSWLNQNGLPQVAVGEVALPATSPNLVESKSFKLYLNSFNQTKFTSWDEVKETLVKDLSACAGETVKVDVFPVQRYSQQPIVDMQGECIDDQDIIIDDYEFNAAYLESSTSDAEIEETLHSHLLKSNCLITNQPDWGSVEIQYKGKKIDREKLLRYLISFRQHNEFHEQCVERIYTDIMKYCAPESLTVFARYTRRGGLDINPFRSSHLLAPKDNLRLARQ</sequence>
<reference key="1">
    <citation type="submission" date="2008-08" db="EMBL/GenBank/DDBJ databases">
        <title>Complete sequence of Vibrio fischeri strain MJ11.</title>
        <authorList>
            <person name="Mandel M.J."/>
            <person name="Stabb E.V."/>
            <person name="Ruby E.G."/>
            <person name="Ferriera S."/>
            <person name="Johnson J."/>
            <person name="Kravitz S."/>
            <person name="Beeson K."/>
            <person name="Sutton G."/>
            <person name="Rogers Y.-H."/>
            <person name="Friedman R."/>
            <person name="Frazier M."/>
            <person name="Venter J.C."/>
        </authorList>
    </citation>
    <scope>NUCLEOTIDE SEQUENCE [LARGE SCALE GENOMIC DNA]</scope>
    <source>
        <strain>MJ11</strain>
    </source>
</reference>
<protein>
    <recommendedName>
        <fullName evidence="1">NADPH-dependent 7-cyano-7-deazaguanine reductase</fullName>
        <ecNumber evidence="1">1.7.1.13</ecNumber>
    </recommendedName>
    <alternativeName>
        <fullName evidence="1">7-cyano-7-carbaguanine reductase</fullName>
    </alternativeName>
    <alternativeName>
        <fullName evidence="1">NADPH-dependent nitrile oxidoreductase</fullName>
    </alternativeName>
    <alternativeName>
        <fullName evidence="1">PreQ(0) reductase</fullName>
    </alternativeName>
</protein>
<feature type="chain" id="PRO_1000134283" description="NADPH-dependent 7-cyano-7-deazaguanine reductase">
    <location>
        <begin position="1"/>
        <end position="281"/>
    </location>
</feature>
<feature type="active site" description="Thioimide intermediate" evidence="1">
    <location>
        <position position="188"/>
    </location>
</feature>
<feature type="active site" description="Proton donor" evidence="1">
    <location>
        <position position="195"/>
    </location>
</feature>
<feature type="binding site" evidence="1">
    <location>
        <begin position="87"/>
        <end position="89"/>
    </location>
    <ligand>
        <name>substrate</name>
    </ligand>
</feature>
<feature type="binding site" evidence="1">
    <location>
        <begin position="89"/>
        <end position="90"/>
    </location>
    <ligand>
        <name>NADPH</name>
        <dbReference type="ChEBI" id="CHEBI:57783"/>
    </ligand>
</feature>
<feature type="binding site" evidence="1">
    <location>
        <begin position="227"/>
        <end position="228"/>
    </location>
    <ligand>
        <name>substrate</name>
    </ligand>
</feature>
<feature type="binding site" evidence="1">
    <location>
        <begin position="256"/>
        <end position="257"/>
    </location>
    <ligand>
        <name>NADPH</name>
        <dbReference type="ChEBI" id="CHEBI:57783"/>
    </ligand>
</feature>
<keyword id="KW-0963">Cytoplasm</keyword>
<keyword id="KW-0521">NADP</keyword>
<keyword id="KW-0560">Oxidoreductase</keyword>
<keyword id="KW-0671">Queuosine biosynthesis</keyword>
<evidence type="ECO:0000255" key="1">
    <source>
        <dbReference type="HAMAP-Rule" id="MF_00817"/>
    </source>
</evidence>